<accession>Q7MYY0</accession>
<organism>
    <name type="scientific">Photorhabdus laumondii subsp. laumondii (strain DSM 15139 / CIP 105565 / TT01)</name>
    <name type="common">Photorhabdus luminescens subsp. laumondii</name>
    <dbReference type="NCBI Taxonomy" id="243265"/>
    <lineage>
        <taxon>Bacteria</taxon>
        <taxon>Pseudomonadati</taxon>
        <taxon>Pseudomonadota</taxon>
        <taxon>Gammaproteobacteria</taxon>
        <taxon>Enterobacterales</taxon>
        <taxon>Morganellaceae</taxon>
        <taxon>Photorhabdus</taxon>
    </lineage>
</organism>
<comment type="function">
    <text evidence="1">Specifically methylates the uridine in position 2552 of 23S rRNA at the 2'-O position of the ribose in the fully assembled 50S ribosomal subunit.</text>
</comment>
<comment type="catalytic activity">
    <reaction evidence="1">
        <text>uridine(2552) in 23S rRNA + S-adenosyl-L-methionine = 2'-O-methyluridine(2552) in 23S rRNA + S-adenosyl-L-homocysteine + H(+)</text>
        <dbReference type="Rhea" id="RHEA:42720"/>
        <dbReference type="Rhea" id="RHEA-COMP:10202"/>
        <dbReference type="Rhea" id="RHEA-COMP:10203"/>
        <dbReference type="ChEBI" id="CHEBI:15378"/>
        <dbReference type="ChEBI" id="CHEBI:57856"/>
        <dbReference type="ChEBI" id="CHEBI:59789"/>
        <dbReference type="ChEBI" id="CHEBI:65315"/>
        <dbReference type="ChEBI" id="CHEBI:74478"/>
        <dbReference type="EC" id="2.1.1.166"/>
    </reaction>
</comment>
<comment type="subcellular location">
    <subcellularLocation>
        <location evidence="1">Cytoplasm</location>
    </subcellularLocation>
</comment>
<comment type="similarity">
    <text evidence="1">Belongs to the class I-like SAM-binding methyltransferase superfamily. RNA methyltransferase RlmE family.</text>
</comment>
<proteinExistence type="inferred from homology"/>
<reference key="1">
    <citation type="journal article" date="2003" name="Nat. Biotechnol.">
        <title>The genome sequence of the entomopathogenic bacterium Photorhabdus luminescens.</title>
        <authorList>
            <person name="Duchaud E."/>
            <person name="Rusniok C."/>
            <person name="Frangeul L."/>
            <person name="Buchrieser C."/>
            <person name="Givaudan A."/>
            <person name="Taourit S."/>
            <person name="Bocs S."/>
            <person name="Boursaux-Eude C."/>
            <person name="Chandler M."/>
            <person name="Charles J.-F."/>
            <person name="Dassa E."/>
            <person name="Derose R."/>
            <person name="Derzelle S."/>
            <person name="Freyssinet G."/>
            <person name="Gaudriault S."/>
            <person name="Medigue C."/>
            <person name="Lanois A."/>
            <person name="Powell K."/>
            <person name="Siguier P."/>
            <person name="Vincent R."/>
            <person name="Wingate V."/>
            <person name="Zouine M."/>
            <person name="Glaser P."/>
            <person name="Boemare N."/>
            <person name="Danchin A."/>
            <person name="Kunst F."/>
        </authorList>
    </citation>
    <scope>NUCLEOTIDE SEQUENCE [LARGE SCALE GENOMIC DNA]</scope>
    <source>
        <strain>DSM 15139 / CIP 105565 / TT01</strain>
    </source>
</reference>
<feature type="chain" id="PRO_0000155519" description="Ribosomal RNA large subunit methyltransferase E">
    <location>
        <begin position="1"/>
        <end position="209"/>
    </location>
</feature>
<feature type="active site" description="Proton acceptor" evidence="1">
    <location>
        <position position="164"/>
    </location>
</feature>
<feature type="binding site" evidence="1">
    <location>
        <position position="63"/>
    </location>
    <ligand>
        <name>S-adenosyl-L-methionine</name>
        <dbReference type="ChEBI" id="CHEBI:59789"/>
    </ligand>
</feature>
<feature type="binding site" evidence="1">
    <location>
        <position position="65"/>
    </location>
    <ligand>
        <name>S-adenosyl-L-methionine</name>
        <dbReference type="ChEBI" id="CHEBI:59789"/>
    </ligand>
</feature>
<feature type="binding site" evidence="1">
    <location>
        <position position="83"/>
    </location>
    <ligand>
        <name>S-adenosyl-L-methionine</name>
        <dbReference type="ChEBI" id="CHEBI:59789"/>
    </ligand>
</feature>
<feature type="binding site" evidence="1">
    <location>
        <position position="99"/>
    </location>
    <ligand>
        <name>S-adenosyl-L-methionine</name>
        <dbReference type="ChEBI" id="CHEBI:59789"/>
    </ligand>
</feature>
<feature type="binding site" evidence="1">
    <location>
        <position position="124"/>
    </location>
    <ligand>
        <name>S-adenosyl-L-methionine</name>
        <dbReference type="ChEBI" id="CHEBI:59789"/>
    </ligand>
</feature>
<name>RLME_PHOLL</name>
<evidence type="ECO:0000255" key="1">
    <source>
        <dbReference type="HAMAP-Rule" id="MF_01547"/>
    </source>
</evidence>
<dbReference type="EC" id="2.1.1.166" evidence="1"/>
<dbReference type="EMBL" id="BX571874">
    <property type="protein sequence ID" value="CAE16908.1"/>
    <property type="molecule type" value="Genomic_DNA"/>
</dbReference>
<dbReference type="RefSeq" id="WP_011148612.1">
    <property type="nucleotide sequence ID" value="NC_005126.1"/>
</dbReference>
<dbReference type="SMR" id="Q7MYY0"/>
<dbReference type="STRING" id="243265.plu4536"/>
<dbReference type="GeneID" id="48850747"/>
<dbReference type="KEGG" id="plu:plu4536"/>
<dbReference type="eggNOG" id="COG0293">
    <property type="taxonomic scope" value="Bacteria"/>
</dbReference>
<dbReference type="HOGENOM" id="CLU_009422_4_0_6"/>
<dbReference type="OrthoDB" id="9790080at2"/>
<dbReference type="Proteomes" id="UP000002514">
    <property type="component" value="Chromosome"/>
</dbReference>
<dbReference type="GO" id="GO:0005737">
    <property type="term" value="C:cytoplasm"/>
    <property type="evidence" value="ECO:0007669"/>
    <property type="project" value="UniProtKB-SubCell"/>
</dbReference>
<dbReference type="GO" id="GO:0008650">
    <property type="term" value="F:rRNA (uridine-2'-O-)-methyltransferase activity"/>
    <property type="evidence" value="ECO:0007669"/>
    <property type="project" value="UniProtKB-UniRule"/>
</dbReference>
<dbReference type="CDD" id="cd02440">
    <property type="entry name" value="AdoMet_MTases"/>
    <property type="match status" value="1"/>
</dbReference>
<dbReference type="FunFam" id="3.40.50.150:FF:000005">
    <property type="entry name" value="Ribosomal RNA large subunit methyltransferase E"/>
    <property type="match status" value="1"/>
</dbReference>
<dbReference type="Gene3D" id="3.40.50.150">
    <property type="entry name" value="Vaccinia Virus protein VP39"/>
    <property type="match status" value="1"/>
</dbReference>
<dbReference type="HAMAP" id="MF_01547">
    <property type="entry name" value="RNA_methyltr_E"/>
    <property type="match status" value="1"/>
</dbReference>
<dbReference type="InterPro" id="IPR050082">
    <property type="entry name" value="RNA_methyltr_RlmE"/>
</dbReference>
<dbReference type="InterPro" id="IPR002877">
    <property type="entry name" value="RNA_MeTrfase_FtsJ_dom"/>
</dbReference>
<dbReference type="InterPro" id="IPR015507">
    <property type="entry name" value="rRNA-MeTfrase_E"/>
</dbReference>
<dbReference type="InterPro" id="IPR004512">
    <property type="entry name" value="rRNA_MeTrfase_gammaproteobac"/>
</dbReference>
<dbReference type="InterPro" id="IPR029063">
    <property type="entry name" value="SAM-dependent_MTases_sf"/>
</dbReference>
<dbReference type="NCBIfam" id="NF008390">
    <property type="entry name" value="PRK11188.1"/>
    <property type="match status" value="1"/>
</dbReference>
<dbReference type="NCBIfam" id="TIGR00438">
    <property type="entry name" value="rrmJ"/>
    <property type="match status" value="1"/>
</dbReference>
<dbReference type="PANTHER" id="PTHR10920">
    <property type="entry name" value="RIBOSOMAL RNA METHYLTRANSFERASE"/>
    <property type="match status" value="1"/>
</dbReference>
<dbReference type="PANTHER" id="PTHR10920:SF18">
    <property type="entry name" value="RRNA METHYLTRANSFERASE 2, MITOCHONDRIAL"/>
    <property type="match status" value="1"/>
</dbReference>
<dbReference type="Pfam" id="PF01728">
    <property type="entry name" value="FtsJ"/>
    <property type="match status" value="1"/>
</dbReference>
<dbReference type="PIRSF" id="PIRSF005461">
    <property type="entry name" value="23S_rRNA_mtase"/>
    <property type="match status" value="1"/>
</dbReference>
<dbReference type="SUPFAM" id="SSF53335">
    <property type="entry name" value="S-adenosyl-L-methionine-dependent methyltransferases"/>
    <property type="match status" value="1"/>
</dbReference>
<protein>
    <recommendedName>
        <fullName evidence="1">Ribosomal RNA large subunit methyltransferase E</fullName>
        <ecNumber evidence="1">2.1.1.166</ecNumber>
    </recommendedName>
    <alternativeName>
        <fullName evidence="1">23S rRNA Um2552 methyltransferase</fullName>
    </alternativeName>
    <alternativeName>
        <fullName evidence="1">rRNA (uridine-2'-O-)-methyltransferase</fullName>
    </alternativeName>
</protein>
<gene>
    <name evidence="1" type="primary">rlmE</name>
    <name evidence="1" type="synonym">ftsJ</name>
    <name evidence="1" type="synonym">rrmJ</name>
    <name type="ordered locus">plu4536</name>
</gene>
<sequence>MANKKRSASSSRWLQEHFSDKYVLQAQKKGLRSRAWFKLDEIQQSDKIFKPGMTVVDLGAAPGGWSQYAVSQISDNGRVIACDLLPMDPIVGVDFLQGDFRDELVLKTLLERVGDNKVQVVMSDMAPNMSGTPAVDIPRSMYLVELALDMCRDVLAPEGSFIVKVFQGEGFDEYLREIRSLFTNVKIRKPDASRARSREVYIVATGRKL</sequence>
<keyword id="KW-0963">Cytoplasm</keyword>
<keyword id="KW-0489">Methyltransferase</keyword>
<keyword id="KW-1185">Reference proteome</keyword>
<keyword id="KW-0698">rRNA processing</keyword>
<keyword id="KW-0949">S-adenosyl-L-methionine</keyword>
<keyword id="KW-0808">Transferase</keyword>